<proteinExistence type="inferred from homology"/>
<feature type="chain" id="PRO_0000250529" description="Protein MgtC">
    <location>
        <begin position="1"/>
        <end position="231"/>
    </location>
</feature>
<feature type="transmembrane region" description="Helical" evidence="2">
    <location>
        <begin position="5"/>
        <end position="25"/>
    </location>
</feature>
<feature type="transmembrane region" description="Helical" evidence="2">
    <location>
        <begin position="39"/>
        <end position="59"/>
    </location>
</feature>
<feature type="transmembrane region" description="Helical" evidence="2">
    <location>
        <begin position="62"/>
        <end position="82"/>
    </location>
</feature>
<feature type="transmembrane region" description="Helical" evidence="2">
    <location>
        <begin position="103"/>
        <end position="123"/>
    </location>
</feature>
<keyword id="KW-0997">Cell inner membrane</keyword>
<keyword id="KW-1003">Cell membrane</keyword>
<keyword id="KW-0472">Membrane</keyword>
<keyword id="KW-0812">Transmembrane</keyword>
<keyword id="KW-1133">Transmembrane helix</keyword>
<keyword id="KW-0843">Virulence</keyword>
<evidence type="ECO:0000250" key="1"/>
<evidence type="ECO:0000255" key="2"/>
<evidence type="ECO:0000305" key="3"/>
<comment type="function">
    <text evidence="1">Virulence factor required for growth in low Mg(2+) medium and for intramacrophage survival. May be involved in regulating membrane potential by activating Na(+)/K(+)-ATPase (By similarity).</text>
</comment>
<comment type="subcellular location">
    <subcellularLocation>
        <location evidence="3">Cell inner membrane</location>
        <topology evidence="3">Multi-pass membrane protein</topology>
    </subcellularLocation>
</comment>
<comment type="similarity">
    <text evidence="3">Belongs to the MgtC/SapB family.</text>
</comment>
<reference key="1">
    <citation type="journal article" date="2001" name="Nature">
        <title>Complete genome sequence of a multiple drug resistant Salmonella enterica serovar Typhi CT18.</title>
        <authorList>
            <person name="Parkhill J."/>
            <person name="Dougan G."/>
            <person name="James K.D."/>
            <person name="Thomson N.R."/>
            <person name="Pickard D."/>
            <person name="Wain J."/>
            <person name="Churcher C.M."/>
            <person name="Mungall K.L."/>
            <person name="Bentley S.D."/>
            <person name="Holden M.T.G."/>
            <person name="Sebaihia M."/>
            <person name="Baker S."/>
            <person name="Basham D."/>
            <person name="Brooks K."/>
            <person name="Chillingworth T."/>
            <person name="Connerton P."/>
            <person name="Cronin A."/>
            <person name="Davis P."/>
            <person name="Davies R.M."/>
            <person name="Dowd L."/>
            <person name="White N."/>
            <person name="Farrar J."/>
            <person name="Feltwell T."/>
            <person name="Hamlin N."/>
            <person name="Haque A."/>
            <person name="Hien T.T."/>
            <person name="Holroyd S."/>
            <person name="Jagels K."/>
            <person name="Krogh A."/>
            <person name="Larsen T.S."/>
            <person name="Leather S."/>
            <person name="Moule S."/>
            <person name="O'Gaora P."/>
            <person name="Parry C."/>
            <person name="Quail M.A."/>
            <person name="Rutherford K.M."/>
            <person name="Simmonds M."/>
            <person name="Skelton J."/>
            <person name="Stevens K."/>
            <person name="Whitehead S."/>
            <person name="Barrell B.G."/>
        </authorList>
    </citation>
    <scope>NUCLEOTIDE SEQUENCE [LARGE SCALE GENOMIC DNA]</scope>
    <source>
        <strain>CT18</strain>
    </source>
</reference>
<reference key="2">
    <citation type="journal article" date="2003" name="J. Bacteriol.">
        <title>Comparative genomics of Salmonella enterica serovar Typhi strains Ty2 and CT18.</title>
        <authorList>
            <person name="Deng W."/>
            <person name="Liou S.-R."/>
            <person name="Plunkett G. III"/>
            <person name="Mayhew G.F."/>
            <person name="Rose D.J."/>
            <person name="Burland V."/>
            <person name="Kodoyianni V."/>
            <person name="Schwartz D.C."/>
            <person name="Blattner F.R."/>
        </authorList>
    </citation>
    <scope>NUCLEOTIDE SEQUENCE [LARGE SCALE GENOMIC DNA]</scope>
    <source>
        <strain>ATCC 700931 / Ty2</strain>
    </source>
</reference>
<gene>
    <name type="primary">mgtC</name>
    <name type="ordered locus">STY4022</name>
    <name type="ordered locus">t3754</name>
</gene>
<name>MGTC_SALTI</name>
<dbReference type="EMBL" id="AL513382">
    <property type="protein sequence ID" value="CAD03230.1"/>
    <property type="molecule type" value="Genomic_DNA"/>
</dbReference>
<dbReference type="EMBL" id="AE014613">
    <property type="protein sequence ID" value="AAO71244.1"/>
    <property type="molecule type" value="Genomic_DNA"/>
</dbReference>
<dbReference type="RefSeq" id="NP_458170.1">
    <property type="nucleotide sequence ID" value="NC_003198.1"/>
</dbReference>
<dbReference type="RefSeq" id="WP_000392697.1">
    <property type="nucleotide sequence ID" value="NZ_WSUR01000001.1"/>
</dbReference>
<dbReference type="SMR" id="Q8Z2J2"/>
<dbReference type="STRING" id="220341.gene:17587873"/>
<dbReference type="KEGG" id="stt:t3754"/>
<dbReference type="KEGG" id="sty:STY4022"/>
<dbReference type="PATRIC" id="fig|220341.7.peg.4106"/>
<dbReference type="eggNOG" id="COG1285">
    <property type="taxonomic scope" value="Bacteria"/>
</dbReference>
<dbReference type="HOGENOM" id="CLU_079292_0_0_6"/>
<dbReference type="OMA" id="HIRFLLM"/>
<dbReference type="OrthoDB" id="9811198at2"/>
<dbReference type="Proteomes" id="UP000000541">
    <property type="component" value="Chromosome"/>
</dbReference>
<dbReference type="Proteomes" id="UP000002670">
    <property type="component" value="Chromosome"/>
</dbReference>
<dbReference type="GO" id="GO:0005886">
    <property type="term" value="C:plasma membrane"/>
    <property type="evidence" value="ECO:0007669"/>
    <property type="project" value="UniProtKB-SubCell"/>
</dbReference>
<dbReference type="Gene3D" id="3.30.70.260">
    <property type="match status" value="1"/>
</dbReference>
<dbReference type="InterPro" id="IPR048640">
    <property type="entry name" value="MgtC-like_C"/>
</dbReference>
<dbReference type="InterPro" id="IPR003416">
    <property type="entry name" value="MgtC/SapB/SrpB/YhiD_fam"/>
</dbReference>
<dbReference type="InterPro" id="IPR049177">
    <property type="entry name" value="MgtC_SapB_SrpB_YhiD_N"/>
</dbReference>
<dbReference type="NCBIfam" id="NF011912">
    <property type="entry name" value="PRK15385.1"/>
    <property type="match status" value="1"/>
</dbReference>
<dbReference type="PANTHER" id="PTHR33778">
    <property type="entry name" value="PROTEIN MGTC"/>
    <property type="match status" value="1"/>
</dbReference>
<dbReference type="PANTHER" id="PTHR33778:SF3">
    <property type="entry name" value="PROTEIN MGTC"/>
    <property type="match status" value="1"/>
</dbReference>
<dbReference type="Pfam" id="PF02308">
    <property type="entry name" value="MgtC"/>
    <property type="match status" value="1"/>
</dbReference>
<dbReference type="Pfam" id="PF21770">
    <property type="entry name" value="MgtC_SapB_C"/>
    <property type="match status" value="1"/>
</dbReference>
<dbReference type="PRINTS" id="PR01837">
    <property type="entry name" value="MGTCSAPBPROT"/>
</dbReference>
<sequence>MEERMLMFPYILNLLAAMLLGALIGAERQWRQRMAGLRTNALVATGAAVFILSSMTTSPDSPGRIAAQIVSGIGFLGAGVIMREGMNVRGLNTAATLWCSAGIGVLCGLGQFKNALAATIIILCANILLREAAQRINQLPVSAEAEKRYILKVTCNKEDESAVRQWLLNIVKEAAICLQGLGSVPAQEQGYKEIRAELVGHADYRKTRELIISRIGDNDNITAIHWSIDSQ</sequence>
<organism>
    <name type="scientific">Salmonella typhi</name>
    <dbReference type="NCBI Taxonomy" id="90370"/>
    <lineage>
        <taxon>Bacteria</taxon>
        <taxon>Pseudomonadati</taxon>
        <taxon>Pseudomonadota</taxon>
        <taxon>Gammaproteobacteria</taxon>
        <taxon>Enterobacterales</taxon>
        <taxon>Enterobacteriaceae</taxon>
        <taxon>Salmonella</taxon>
    </lineage>
</organism>
<accession>Q8Z2J2</accession>
<accession>Q7C6D0</accession>
<protein>
    <recommendedName>
        <fullName>Protein MgtC</fullName>
    </recommendedName>
</protein>